<reference key="1">
    <citation type="journal article" date="1989" name="Nucleic Acids Res.">
        <title>The SSB1 heat shock cognate gene of the yeast Saccharomyces cerevisiae.</title>
        <authorList>
            <person name="Slater M.R."/>
            <person name="Craig E.A."/>
        </authorList>
    </citation>
    <scope>NUCLEOTIDE SEQUENCE [GENOMIC DNA]</scope>
    <source>
        <strain>ATCC 204508 / S288c</strain>
    </source>
</reference>
<reference key="2">
    <citation type="journal article" date="1989" name="Cell">
        <title>S. cerevisiae encodes an essential protein homologous in sequence and function to mammalian BiP.</title>
        <authorList>
            <person name="Normington K."/>
            <person name="Kohno K."/>
            <person name="Kozutsumi Y."/>
            <person name="Gething M.J."/>
            <person name="Sambrook J."/>
        </authorList>
    </citation>
    <scope>NUCLEOTIDE SEQUENCE [MRNA]</scope>
</reference>
<reference key="3">
    <citation type="journal article" date="1997" name="Nature">
        <title>The nucleotide sequence of Saccharomyces cerevisiae chromosome IV.</title>
        <authorList>
            <person name="Jacq C."/>
            <person name="Alt-Moerbe J."/>
            <person name="Andre B."/>
            <person name="Arnold W."/>
            <person name="Bahr A."/>
            <person name="Ballesta J.P.G."/>
            <person name="Bargues M."/>
            <person name="Baron L."/>
            <person name="Becker A."/>
            <person name="Biteau N."/>
            <person name="Bloecker H."/>
            <person name="Blugeon C."/>
            <person name="Boskovic J."/>
            <person name="Brandt P."/>
            <person name="Brueckner M."/>
            <person name="Buitrago M.J."/>
            <person name="Coster F."/>
            <person name="Delaveau T."/>
            <person name="del Rey F."/>
            <person name="Dujon B."/>
            <person name="Eide L.G."/>
            <person name="Garcia-Cantalejo J.M."/>
            <person name="Goffeau A."/>
            <person name="Gomez-Peris A."/>
            <person name="Granotier C."/>
            <person name="Hanemann V."/>
            <person name="Hankeln T."/>
            <person name="Hoheisel J.D."/>
            <person name="Jaeger W."/>
            <person name="Jimenez A."/>
            <person name="Jonniaux J.-L."/>
            <person name="Kraemer C."/>
            <person name="Kuester H."/>
            <person name="Laamanen P."/>
            <person name="Legros Y."/>
            <person name="Louis E.J."/>
            <person name="Moeller-Rieker S."/>
            <person name="Monnet A."/>
            <person name="Moro M."/>
            <person name="Mueller-Auer S."/>
            <person name="Nussbaumer B."/>
            <person name="Paricio N."/>
            <person name="Paulin L."/>
            <person name="Perea J."/>
            <person name="Perez-Alonso M."/>
            <person name="Perez-Ortin J.E."/>
            <person name="Pohl T.M."/>
            <person name="Prydz H."/>
            <person name="Purnelle B."/>
            <person name="Rasmussen S.W."/>
            <person name="Remacha M.A."/>
            <person name="Revuelta J.L."/>
            <person name="Rieger M."/>
            <person name="Salom D."/>
            <person name="Saluz H.P."/>
            <person name="Saiz J.E."/>
            <person name="Saren A.-M."/>
            <person name="Schaefer M."/>
            <person name="Scharfe M."/>
            <person name="Schmidt E.R."/>
            <person name="Schneider C."/>
            <person name="Scholler P."/>
            <person name="Schwarz S."/>
            <person name="Soler-Mira A."/>
            <person name="Urrestarazu L.A."/>
            <person name="Verhasselt P."/>
            <person name="Vissers S."/>
            <person name="Voet M."/>
            <person name="Volckaert G."/>
            <person name="Wagner G."/>
            <person name="Wambutt R."/>
            <person name="Wedler E."/>
            <person name="Wedler H."/>
            <person name="Woelfl S."/>
            <person name="Harris D.E."/>
            <person name="Bowman S."/>
            <person name="Brown D."/>
            <person name="Churcher C.M."/>
            <person name="Connor R."/>
            <person name="Dedman K."/>
            <person name="Gentles S."/>
            <person name="Hamlin N."/>
            <person name="Hunt S."/>
            <person name="Jones L."/>
            <person name="McDonald S."/>
            <person name="Murphy L.D."/>
            <person name="Niblett D."/>
            <person name="Odell C."/>
            <person name="Oliver K."/>
            <person name="Rajandream M.A."/>
            <person name="Richards C."/>
            <person name="Shore L."/>
            <person name="Walsh S.V."/>
            <person name="Barrell B.G."/>
            <person name="Dietrich F.S."/>
            <person name="Mulligan J.T."/>
            <person name="Allen E."/>
            <person name="Araujo R."/>
            <person name="Aviles E."/>
            <person name="Berno A."/>
            <person name="Carpenter J."/>
            <person name="Chen E."/>
            <person name="Cherry J.M."/>
            <person name="Chung E."/>
            <person name="Duncan M."/>
            <person name="Hunicke-Smith S."/>
            <person name="Hyman R.W."/>
            <person name="Komp C."/>
            <person name="Lashkari D."/>
            <person name="Lew H."/>
            <person name="Lin D."/>
            <person name="Mosedale D."/>
            <person name="Nakahara K."/>
            <person name="Namath A."/>
            <person name="Oefner P."/>
            <person name="Oh C."/>
            <person name="Petel F.X."/>
            <person name="Roberts D."/>
            <person name="Schramm S."/>
            <person name="Schroeder M."/>
            <person name="Shogren T."/>
            <person name="Shroff N."/>
            <person name="Winant A."/>
            <person name="Yelton M.A."/>
            <person name="Botstein D."/>
            <person name="Davis R.W."/>
            <person name="Johnston M."/>
            <person name="Andrews S."/>
            <person name="Brinkman R."/>
            <person name="Cooper J."/>
            <person name="Ding H."/>
            <person name="Du Z."/>
            <person name="Favello A."/>
            <person name="Fulton L."/>
            <person name="Gattung S."/>
            <person name="Greco T."/>
            <person name="Hallsworth K."/>
            <person name="Hawkins J."/>
            <person name="Hillier L.W."/>
            <person name="Jier M."/>
            <person name="Johnson D."/>
            <person name="Johnston L."/>
            <person name="Kirsten J."/>
            <person name="Kucaba T."/>
            <person name="Langston Y."/>
            <person name="Latreille P."/>
            <person name="Le T."/>
            <person name="Mardis E."/>
            <person name="Menezes S."/>
            <person name="Miller N."/>
            <person name="Nhan M."/>
            <person name="Pauley A."/>
            <person name="Peluso D."/>
            <person name="Rifkin L."/>
            <person name="Riles L."/>
            <person name="Taich A."/>
            <person name="Trevaskis E."/>
            <person name="Vignati D."/>
            <person name="Wilcox L."/>
            <person name="Wohldman P."/>
            <person name="Vaudin M."/>
            <person name="Wilson R."/>
            <person name="Waterston R."/>
            <person name="Albermann K."/>
            <person name="Hani J."/>
            <person name="Heumann K."/>
            <person name="Kleine K."/>
            <person name="Mewes H.-W."/>
            <person name="Zollner A."/>
            <person name="Zaccaria P."/>
        </authorList>
    </citation>
    <scope>NUCLEOTIDE SEQUENCE [LARGE SCALE GENOMIC DNA]</scope>
    <source>
        <strain>ATCC 204508 / S288c</strain>
    </source>
</reference>
<reference key="4">
    <citation type="journal article" date="2014" name="G3 (Bethesda)">
        <title>The reference genome sequence of Saccharomyces cerevisiae: Then and now.</title>
        <authorList>
            <person name="Engel S.R."/>
            <person name="Dietrich F.S."/>
            <person name="Fisk D.G."/>
            <person name="Binkley G."/>
            <person name="Balakrishnan R."/>
            <person name="Costanzo M.C."/>
            <person name="Dwight S.S."/>
            <person name="Hitz B.C."/>
            <person name="Karra K."/>
            <person name="Nash R.S."/>
            <person name="Weng S."/>
            <person name="Wong E.D."/>
            <person name="Lloyd P."/>
            <person name="Skrzypek M.S."/>
            <person name="Miyasato S.R."/>
            <person name="Simison M."/>
            <person name="Cherry J.M."/>
        </authorList>
    </citation>
    <scope>GENOME REANNOTATION</scope>
    <source>
        <strain>ATCC 204508 / S288c</strain>
    </source>
</reference>
<reference key="5">
    <citation type="journal article" date="1982" name="Mol. Cell. Biol.">
        <title>Saccharomyces cerevisiae contains a complex multigene family related to the major heat shock-inducible gene of Drosophila.</title>
        <authorList>
            <person name="Ingolia T.D."/>
            <person name="Slater M.R."/>
            <person name="Craig E.A."/>
        </authorList>
    </citation>
    <scope>NUCLEOTIDE SEQUENCE [GENOMIC DNA] OF 1-78 AND 180-403</scope>
    <scope>INDUCTION</scope>
    <source>
        <strain>ATCC 204508 / S288c</strain>
    </source>
</reference>
<reference key="6">
    <citation type="journal article" date="1995" name="Electrophoresis">
        <title>Gene linkage of two-dimensional polyacrylamide gel electrophoresis resolved proteins from isogene families in Saccharomyces cerevisiae by microsequencing of in-gel trypsin generated peptides.</title>
        <authorList>
            <person name="Norbeck J."/>
            <person name="Blomberg A."/>
        </authorList>
    </citation>
    <scope>PROTEIN SEQUENCE OF 39-49 AND 431-439</scope>
    <source>
        <strain>ATCC 38531 / Y41</strain>
    </source>
</reference>
<reference key="7">
    <citation type="journal article" date="1994" name="Electrophoresis">
        <title>Protein identifications for a Saccharomyces cerevisiae protein database.</title>
        <authorList>
            <person name="Garrels J.I."/>
            <person name="Futcher B."/>
            <person name="Kobayashi R."/>
            <person name="Latter G.I."/>
            <person name="Schwender B."/>
            <person name="Volpe T."/>
            <person name="Warner J.R."/>
            <person name="McLaughlin C.S."/>
        </authorList>
    </citation>
    <scope>PROTEIN SEQUENCE OF 145-159</scope>
    <source>
        <strain>ATCC 204508 / S288c</strain>
    </source>
</reference>
<reference key="8">
    <citation type="journal article" date="1987" name="Mol. Cell. Biol.">
        <title>Complex interactions among members of an essential subfamily of hsp70 genes in Saccharomyces cerevisiae.</title>
        <authorList>
            <person name="Werner-Washburne M."/>
            <person name="Stone D.E."/>
            <person name="Craig E.A."/>
        </authorList>
    </citation>
    <scope>GENE FAMILY</scope>
</reference>
<reference key="9">
    <citation type="journal article" date="1989" name="J. Bacteriol.">
        <title>Yeast Hsp70 RNA levels vary in response to the physiological status of the cell.</title>
        <authorList>
            <person name="Werner-Washburne M."/>
            <person name="Becker J."/>
            <person name="Kosic-Smithers J."/>
            <person name="Craig E.A."/>
        </authorList>
    </citation>
    <scope>INDUCTION</scope>
</reference>
<reference key="10">
    <citation type="journal article" date="1992" name="Cell">
        <title>The translation machinery and 70 kd heat shock protein cooperate in protein synthesis.</title>
        <authorList>
            <person name="Nelson R.J."/>
            <person name="Ziegelhoffer T."/>
            <person name="Nicolet C."/>
            <person name="Werner-Washburne M."/>
            <person name="Craig E.A."/>
        </authorList>
    </citation>
    <scope>FUNCTION</scope>
    <scope>SUBCELLULAR LOCATION</scope>
</reference>
<reference key="11">
    <citation type="journal article" date="1995" name="Biochem. Biophys. Res. Commun.">
        <title>Detection and expression of the 70 kDa heat shock protein SSB1P at different temperatures in Saccharomyces cerevisiae.</title>
        <authorList>
            <person name="Iwahashi H."/>
            <person name="Wu Y."/>
            <person name="Tanguay R.M."/>
        </authorList>
    </citation>
    <scope>INDUCTION</scope>
</reference>
<reference key="12">
    <citation type="journal article" date="1997" name="Electrophoresis">
        <title>Proteome studies of Saccharomyces cerevisiae: identification and characterization of abundant proteins.</title>
        <authorList>
            <person name="Garrels J.I."/>
            <person name="McLaughlin C.S."/>
            <person name="Warner J.R."/>
            <person name="Futcher B."/>
            <person name="Latter G.I."/>
            <person name="Kobayashi R."/>
            <person name="Schwender B."/>
            <person name="Volpe T."/>
            <person name="Anderson D.S."/>
            <person name="Mesquita-Fuentes R."/>
            <person name="Payne W.E."/>
        </authorList>
    </citation>
    <scope>ACETYLATION AT ALA-2</scope>
</reference>
<reference key="13">
    <citation type="journal article" date="1997" name="Science">
        <title>Functional specificity among Hsp70 molecular chaperones.</title>
        <authorList>
            <person name="James P."/>
            <person name="Pfund C."/>
            <person name="Craig E.A."/>
        </authorList>
    </citation>
    <scope>FUNCTION</scope>
</reference>
<reference key="14">
    <citation type="journal article" date="1998" name="EMBO J.">
        <title>The molecular chaperone Ssb from Saccharomyces cerevisiae is a component of the ribosome-nascent chain complex.</title>
        <authorList>
            <person name="Pfund C."/>
            <person name="Lopez-Hoyo N."/>
            <person name="Ziegelhoffer T."/>
            <person name="Schilke B.A."/>
            <person name="Lopez-Buesa P."/>
            <person name="Walter W.A."/>
            <person name="Wiedmann M."/>
            <person name="Craig E.A."/>
        </authorList>
    </citation>
    <scope>FUNCTION</scope>
    <scope>SUBUNIT</scope>
</reference>
<reference key="15">
    <citation type="journal article" date="1998" name="Proc. Natl. Acad. Sci. U.S.A.">
        <title>The biochemical properties of the ATPase activity of a 70-kDa heat shock protein (Hsp70) are governed by the C-terminal domains.</title>
        <authorList>
            <person name="Lopez-Buesa P."/>
            <person name="Pfund C."/>
            <person name="Craig E.A."/>
        </authorList>
    </citation>
    <scope>BIOPHYSICOCHEMICAL PROPERTIES</scope>
</reference>
<reference key="16">
    <citation type="journal article" date="1999" name="J. Bacteriol.">
        <title>SSB, encoding a ribosome-associated chaperone, is coordinately regulated with ribosomal protein genes.</title>
        <authorList>
            <person name="Lopez N."/>
            <person name="Halladay J."/>
            <person name="Walter W."/>
            <person name="Craig E.A."/>
        </authorList>
    </citation>
    <scope>INDUCTION</scope>
</reference>
<reference key="17">
    <citation type="journal article" date="1999" name="J. Biol. Chem.">
        <title>A nuclear export signal prevents Saccharomyces cerevisiae Hsp70 Ssb1p from stimulating nuclear localization signal-directed nuclear transport.</title>
        <authorList>
            <person name="Shulga N."/>
            <person name="James P."/>
            <person name="Craig E.A."/>
            <person name="Goldfarb D.S."/>
        </authorList>
    </citation>
    <scope>SUBCELLULAR LOCATION</scope>
</reference>
<reference key="18">
    <citation type="journal article" date="2001" name="Mol. Biol. Cell">
        <title>Divergent functional properties of the ribosome-associated molecular chaperone Ssb compared with other Hsp70s.</title>
        <authorList>
            <person name="Pfund C."/>
            <person name="Huang P."/>
            <person name="Lopez-Hoyo N."/>
            <person name="Craig E.A."/>
        </authorList>
    </citation>
    <scope>FUNCTION</scope>
</reference>
<reference key="19">
    <citation type="journal article" date="2002" name="Proc. Natl. Acad. Sci. U.S.A.">
        <title>A functional chaperone triad on the yeast ribosome.</title>
        <authorList>
            <person name="Gautschi M."/>
            <person name="Mun A."/>
            <person name="Ross S."/>
            <person name="Rospert S."/>
        </authorList>
    </citation>
    <scope>FUNCTION</scope>
    <scope>SUBUNIT</scope>
</reference>
<reference key="20">
    <citation type="journal article" date="2003" name="Nature">
        <title>Global analysis of protein expression in yeast.</title>
        <authorList>
            <person name="Ghaemmaghami S."/>
            <person name="Huh W.-K."/>
            <person name="Bower K."/>
            <person name="Howson R.W."/>
            <person name="Belle A."/>
            <person name="Dephoure N."/>
            <person name="O'Shea E.K."/>
            <person name="Weissman J.S."/>
        </authorList>
    </citation>
    <scope>LEVEL OF PROTEIN EXPRESSION [LARGE SCALE ANALYSIS]</scope>
</reference>
<reference key="21">
    <citation type="journal article" date="2005" name="J. Biol. Chem.">
        <title>Hsp110 cooperates with different cytosolic HSP70 systems in a pathway for de novo folding.</title>
        <authorList>
            <person name="Yam A.Y."/>
            <person name="Albanese V."/>
            <person name="Lin H.T."/>
            <person name="Frydman J."/>
        </authorList>
    </citation>
    <scope>FUNCTION</scope>
    <scope>INTERACTION WITH SSE1</scope>
</reference>
<reference key="22">
    <citation type="journal article" date="2005" name="J. Biol. Chem.">
        <title>The yeast Hsp110 Sse1 functionally interacts with the Hsp70 chaperones Ssa and Ssb.</title>
        <authorList>
            <person name="Shaner L."/>
            <person name="Wegele H."/>
            <person name="Buchner J."/>
            <person name="Morano K.A."/>
        </authorList>
    </citation>
    <scope>FUNCTION</scope>
    <scope>INTERACTION WITH SSE1</scope>
</reference>
<reference key="23">
    <citation type="journal article" date="2006" name="Biol. Chem.">
        <title>Fes1p acts as a nucleotide exchange factor for the ribosome-associated molecular chaperone Ssb1p.</title>
        <authorList>
            <person name="Dragovic Z."/>
            <person name="Shomura Y."/>
            <person name="Tzvetkov N."/>
            <person name="Hartl F.U."/>
            <person name="Bracher A."/>
        </authorList>
    </citation>
    <scope>INTERACTION WITH FES1</scope>
</reference>
<reference key="24">
    <citation type="journal article" date="2007" name="J. Proteome Res.">
        <title>Large-scale phosphorylation analysis of alpha-factor-arrested Saccharomyces cerevisiae.</title>
        <authorList>
            <person name="Li X."/>
            <person name="Gerber S.A."/>
            <person name="Rudner A.D."/>
            <person name="Beausoleil S.A."/>
            <person name="Haas W."/>
            <person name="Villen J."/>
            <person name="Elias J.E."/>
            <person name="Gygi S.P."/>
        </authorList>
    </citation>
    <scope>IDENTIFICATION BY MASS SPECTROMETRY [LARGE SCALE ANALYSIS]</scope>
    <source>
        <strain>ADR376</strain>
    </source>
</reference>
<reference key="25">
    <citation type="journal article" date="2008" name="Mol. Cell. Biol.">
        <title>Phosphorylation by casein kinase 2 regulates Nap1 localization and function.</title>
        <authorList>
            <person name="Calvert M.E.K."/>
            <person name="Keck K.M."/>
            <person name="Ptak C."/>
            <person name="Shabanowitz J."/>
            <person name="Hunt D.F."/>
            <person name="Pemberton L.F."/>
        </authorList>
    </citation>
    <scope>INTERACTION WITH NAP1</scope>
    <scope>IDENTIFICATION BY MASS SPECTROMETRY</scope>
</reference>
<reference key="26">
    <citation type="journal article" date="2008" name="Mol. Cell. Proteomics">
        <title>A multidimensional chromatography technology for in-depth phosphoproteome analysis.</title>
        <authorList>
            <person name="Albuquerque C.P."/>
            <person name="Smolka M.B."/>
            <person name="Payne S.H."/>
            <person name="Bafna V."/>
            <person name="Eng J."/>
            <person name="Zhou H."/>
        </authorList>
    </citation>
    <scope>PHOSPHORYLATION [LARGE SCALE ANALYSIS] AT THR-47</scope>
    <scope>IDENTIFICATION BY MASS SPECTROMETRY [LARGE SCALE ANALYSIS]</scope>
</reference>
<reference key="27">
    <citation type="journal article" date="2009" name="Science">
        <title>Global analysis of Cdk1 substrate phosphorylation sites provides insights into evolution.</title>
        <authorList>
            <person name="Holt L.J."/>
            <person name="Tuch B.B."/>
            <person name="Villen J."/>
            <person name="Johnson A.D."/>
            <person name="Gygi S.P."/>
            <person name="Morgan D.O."/>
        </authorList>
    </citation>
    <scope>PHOSPHORYLATION [LARGE SCALE ANALYSIS] AT THR-431</scope>
    <scope>IDENTIFICATION BY MASS SPECTROMETRY [LARGE SCALE ANALYSIS]</scope>
</reference>
<reference key="28">
    <citation type="journal article" date="2013" name="Cell">
        <title>The cotranslational function of ribosome-associated Hsp70 in eukaryotic protein homeostasis.</title>
        <authorList>
            <person name="Willmund F."/>
            <person name="del Alamo M."/>
            <person name="Pechmann S."/>
            <person name="Chen T."/>
            <person name="Albanese V."/>
            <person name="Dammer E.B."/>
            <person name="Peng J."/>
            <person name="Frydman J."/>
        </authorList>
    </citation>
    <scope>FUNCTION</scope>
    <scope>SUBCELLULAR LOCATION</scope>
    <scope>INTERACTION WITH RAC AND SSE1</scope>
</reference>
<reference key="29">
    <citation type="journal article" date="2016" name="Nat. Commun.">
        <title>Interaction of the cotranslational Hsp70 Ssb with ribosomal proteins and rRNA depends on its lid domain.</title>
        <authorList>
            <person name="Gumiero A."/>
            <person name="Conz C."/>
            <person name="Gese G.V."/>
            <person name="Zhang Y."/>
            <person name="Weyer F.A."/>
            <person name="Lapouge K."/>
            <person name="Kappes J."/>
            <person name="von Plehwe U."/>
            <person name="Schermann G."/>
            <person name="Fitzke E."/>
            <person name="Woelfle T."/>
            <person name="Fischer T."/>
            <person name="Rospert S."/>
            <person name="Sinning I."/>
        </authorList>
    </citation>
    <scope>INTERACTION WITH RPL35; RPL39 AND RPL19</scope>
    <scope>MUTAGENESIS OF 567-LYS-ARG-568; 596-ARG-LYS-597 AND 603-LYS-ARG-604</scope>
</reference>
<reference key="30">
    <citation type="journal article" date="2016" name="Nat. Commun.">
        <title>Multivalent contacts of the Hsp70 Ssb contribute to its architecture on ribosomes and nascent chain interaction.</title>
        <authorList>
            <person name="Hanebuth M.A."/>
            <person name="Kityk R."/>
            <person name="Fries S.J."/>
            <person name="Jain A."/>
            <person name="Kriel A."/>
            <person name="Albanese V."/>
            <person name="Frickey T."/>
            <person name="Peter C."/>
            <person name="Mayer M.P."/>
            <person name="Frydman J."/>
            <person name="Deuerling E."/>
        </authorList>
    </citation>
    <scope>SUBUNIT</scope>
</reference>
<reference key="31">
    <citation type="submission" date="2009-03" db="PDB data bank">
        <title>Crystal structure of ATPase domain of Ssb1 chaperone, member of the HSP70 family from Saccharomyces cerevisiae.</title>
        <authorList>
            <person name="Osipiuk J."/>
            <person name="Li H."/>
            <person name="Bargassa M."/>
            <person name="Sahi C."/>
            <person name="Craig E.A."/>
            <person name="Joachimiak A."/>
        </authorList>
    </citation>
    <scope>X-RAY CRYSTALLOGRAPHY (1.92 ANGSTROMS) OF 1-384</scope>
</reference>
<gene>
    <name evidence="23" type="primary">SSB1</name>
    <name evidence="24" type="synonym">YG101</name>
    <name evidence="29" type="ordered locus">YDL229W</name>
</gene>
<name>SSB1_YEAST</name>
<evidence type="ECO:0000250" key="1">
    <source>
        <dbReference type="UniProtKB" id="G0SCU5"/>
    </source>
</evidence>
<evidence type="ECO:0000269" key="2">
    <source>
    </source>
</evidence>
<evidence type="ECO:0000269" key="3">
    <source>
    </source>
</evidence>
<evidence type="ECO:0000269" key="4">
    <source>
    </source>
</evidence>
<evidence type="ECO:0000269" key="5">
    <source>
    </source>
</evidence>
<evidence type="ECO:0000269" key="6">
    <source>
    </source>
</evidence>
<evidence type="ECO:0000269" key="7">
    <source>
    </source>
</evidence>
<evidence type="ECO:0000269" key="8">
    <source>
    </source>
</evidence>
<evidence type="ECO:0000269" key="9">
    <source>
    </source>
</evidence>
<evidence type="ECO:0000269" key="10">
    <source>
    </source>
</evidence>
<evidence type="ECO:0000269" key="11">
    <source>
    </source>
</evidence>
<evidence type="ECO:0000269" key="12">
    <source>
    </source>
</evidence>
<evidence type="ECO:0000269" key="13">
    <source>
    </source>
</evidence>
<evidence type="ECO:0000269" key="14">
    <source>
    </source>
</evidence>
<evidence type="ECO:0000269" key="15">
    <source>
    </source>
</evidence>
<evidence type="ECO:0000269" key="16">
    <source>
    </source>
</evidence>
<evidence type="ECO:0000269" key="17">
    <source>
    </source>
</evidence>
<evidence type="ECO:0000269" key="18">
    <source>
    </source>
</evidence>
<evidence type="ECO:0000269" key="19">
    <source>
    </source>
</evidence>
<evidence type="ECO:0000269" key="20">
    <source>
    </source>
</evidence>
<evidence type="ECO:0000269" key="21">
    <source>
    </source>
</evidence>
<evidence type="ECO:0000303" key="22">
    <source>
    </source>
</evidence>
<evidence type="ECO:0000303" key="23">
    <source>
    </source>
</evidence>
<evidence type="ECO:0000303" key="24">
    <source>
    </source>
</evidence>
<evidence type="ECO:0000303" key="25">
    <source>
    </source>
</evidence>
<evidence type="ECO:0000305" key="26"/>
<evidence type="ECO:0000305" key="27">
    <source>
    </source>
</evidence>
<evidence type="ECO:0000305" key="28">
    <source>
    </source>
</evidence>
<evidence type="ECO:0000312" key="29">
    <source>
        <dbReference type="SGD" id="S000002388"/>
    </source>
</evidence>
<evidence type="ECO:0007744" key="30">
    <source>
    </source>
</evidence>
<evidence type="ECO:0007744" key="31">
    <source>
    </source>
</evidence>
<evidence type="ECO:0007829" key="32">
    <source>
        <dbReference type="PDB" id="3GL1"/>
    </source>
</evidence>
<sequence length="613" mass="66602">MAEGVFQGAIGIDLGTTYSCVATYESSVEIIANEQGNRVTPSFVAFTPEERLIGDAAKNQAALNPRNTVFDAKRLIGRRFDDESVQKDMKTWPFKVIDVDGNPVIEVQYLEETKTFSPQEISAMVLTKMKEIAEAKIGKKVEKAVITVPAYFNDAQRQATKDAGAISGLNVLRIINEPTAAAIAYGLGAGKSEKERHVLIFDLGGGTFDVSLLHIAGGVYTVKSTSGNTHLGGQDFDTNLLEHFKAEFKKKTGLDISDDARALRRLRTAAERAKRTLSSVTQTTVEVDSLFDGEDFESSLTRARFEDLNAALFKSTLEPVEQVLKDAKISKSQIDEVVLVGGSTRIPKVQKLLSDFFDGKQLEKSINPDEAVAYGAAVQGAILTGQSTSDETKDLLLLDVAPLSLGVGMQGDMFGIVVPRNTTVPTIKRRTFTTCADNQTTVQFPVYQGERVNCKENTLLGEFDLKNIPMMPAGEPVLEAIFEVDANGILKVTAVEKSTGKSSNITISNAVGRLSSEEIEKMVNQAEEFKAADEAFAKKHEARQRLESYVASIEQTVTDPVLSSKLKRGSKSKIEAALSDALAALQIEDPSADELRKAEVGLKRVVTKAMSSR</sequence>
<keyword id="KW-0002">3D-structure</keyword>
<keyword id="KW-0007">Acetylation</keyword>
<keyword id="KW-0067">ATP-binding</keyword>
<keyword id="KW-0143">Chaperone</keyword>
<keyword id="KW-0963">Cytoplasm</keyword>
<keyword id="KW-0903">Direct protein sequencing</keyword>
<keyword id="KW-0378">Hydrolase</keyword>
<keyword id="KW-0547">Nucleotide-binding</keyword>
<keyword id="KW-0597">Phosphoprotein</keyword>
<keyword id="KW-0648">Protein biosynthesis</keyword>
<keyword id="KW-1185">Reference proteome</keyword>
<proteinExistence type="evidence at protein level"/>
<dbReference type="EC" id="3.6.4.10" evidence="21"/>
<dbReference type="EMBL" id="X13713">
    <property type="protein sequence ID" value="CAA31995.1"/>
    <property type="molecule type" value="Genomic_DNA"/>
</dbReference>
<dbReference type="EMBL" id="M25395">
    <property type="protein sequence ID" value="AAA35099.1"/>
    <property type="molecule type" value="mRNA"/>
</dbReference>
<dbReference type="EMBL" id="Z74277">
    <property type="protein sequence ID" value="CAA98807.1"/>
    <property type="molecule type" value="Genomic_DNA"/>
</dbReference>
<dbReference type="EMBL" id="AH001377">
    <property type="protein sequence ID" value="AAA34691.1"/>
    <property type="molecule type" value="Genomic_DNA"/>
</dbReference>
<dbReference type="EMBL" id="AH001377">
    <property type="protein sequence ID" value="AAA34692.1"/>
    <property type="molecule type" value="Genomic_DNA"/>
</dbReference>
<dbReference type="EMBL" id="BK006938">
    <property type="protein sequence ID" value="DAA11637.1"/>
    <property type="molecule type" value="Genomic_DNA"/>
</dbReference>
<dbReference type="PIR" id="S20149">
    <property type="entry name" value="S20149"/>
</dbReference>
<dbReference type="RefSeq" id="NP_010052.1">
    <property type="nucleotide sequence ID" value="NM_001180289.1"/>
</dbReference>
<dbReference type="PDB" id="3GL1">
    <property type="method" value="X-ray"/>
    <property type="resolution" value="1.92 A"/>
    <property type="chains" value="A/B=1-384"/>
</dbReference>
<dbReference type="PDBsum" id="3GL1"/>
<dbReference type="SMR" id="P11484"/>
<dbReference type="BioGRID" id="31882">
    <property type="interactions" value="859"/>
</dbReference>
<dbReference type="DIP" id="DIP-2254N"/>
<dbReference type="FunCoup" id="P11484">
    <property type="interactions" value="2141"/>
</dbReference>
<dbReference type="IntAct" id="P11484">
    <property type="interactions" value="784"/>
</dbReference>
<dbReference type="MINT" id="P11484"/>
<dbReference type="STRING" id="4932.YDL229W"/>
<dbReference type="CarbonylDB" id="P11484"/>
<dbReference type="GlyGen" id="P11484">
    <property type="glycosylation" value="1 site"/>
</dbReference>
<dbReference type="iPTMnet" id="P11484"/>
<dbReference type="PaxDb" id="4932-YDL229W"/>
<dbReference type="PeptideAtlas" id="P11484"/>
<dbReference type="TopDownProteomics" id="P11484"/>
<dbReference type="DNASU" id="851369"/>
<dbReference type="EnsemblFungi" id="YDL229W_mRNA">
    <property type="protein sequence ID" value="YDL229W"/>
    <property type="gene ID" value="YDL229W"/>
</dbReference>
<dbReference type="GeneID" id="851369"/>
<dbReference type="KEGG" id="sce:YDL229W"/>
<dbReference type="AGR" id="SGD:S000002388"/>
<dbReference type="SGD" id="S000002388">
    <property type="gene designation" value="SSB1"/>
</dbReference>
<dbReference type="VEuPathDB" id="FungiDB:YDL229W"/>
<dbReference type="eggNOG" id="KOG0101">
    <property type="taxonomic scope" value="Eukaryota"/>
</dbReference>
<dbReference type="GeneTree" id="ENSGT00940000154813"/>
<dbReference type="HOGENOM" id="CLU_005965_2_1_1"/>
<dbReference type="InParanoid" id="P11484"/>
<dbReference type="OMA" id="NIPPMQA"/>
<dbReference type="OrthoDB" id="2401965at2759"/>
<dbReference type="BioCyc" id="YEAST:G3O-29608-MONOMER"/>
<dbReference type="Reactome" id="R-SCE-3371453">
    <property type="pathway name" value="Regulation of HSF1-mediated heat shock response"/>
</dbReference>
<dbReference type="Reactome" id="R-SCE-3371497">
    <property type="pathway name" value="HSP90 chaperone cycle for steroid hormone receptors (SHR) in the presence of ligand"/>
</dbReference>
<dbReference type="Reactome" id="R-SCE-3371571">
    <property type="pathway name" value="HSF1-dependent transactivation"/>
</dbReference>
<dbReference type="Reactome" id="R-SCE-6798695">
    <property type="pathway name" value="Neutrophil degranulation"/>
</dbReference>
<dbReference type="Reactome" id="R-SCE-9841251">
    <property type="pathway name" value="Mitochondrial unfolded protein response (UPRmt)"/>
</dbReference>
<dbReference type="BioGRID-ORCS" id="851369">
    <property type="hits" value="1 hit in 10 CRISPR screens"/>
</dbReference>
<dbReference type="EvolutionaryTrace" id="P11484"/>
<dbReference type="PRO" id="PR:P11484"/>
<dbReference type="Proteomes" id="UP000002311">
    <property type="component" value="Chromosome IV"/>
</dbReference>
<dbReference type="RNAct" id="P11484">
    <property type="molecule type" value="protein"/>
</dbReference>
<dbReference type="GO" id="GO:0005737">
    <property type="term" value="C:cytoplasm"/>
    <property type="evidence" value="ECO:0000314"/>
    <property type="project" value="SGD"/>
</dbReference>
<dbReference type="GO" id="GO:0005829">
    <property type="term" value="C:cytosol"/>
    <property type="evidence" value="ECO:0000318"/>
    <property type="project" value="GO_Central"/>
</dbReference>
<dbReference type="GO" id="GO:0005634">
    <property type="term" value="C:nucleus"/>
    <property type="evidence" value="ECO:0000318"/>
    <property type="project" value="GO_Central"/>
</dbReference>
<dbReference type="GO" id="GO:0005886">
    <property type="term" value="C:plasma membrane"/>
    <property type="evidence" value="ECO:0007005"/>
    <property type="project" value="SGD"/>
</dbReference>
<dbReference type="GO" id="GO:0005524">
    <property type="term" value="F:ATP binding"/>
    <property type="evidence" value="ECO:0007669"/>
    <property type="project" value="UniProtKB-KW"/>
</dbReference>
<dbReference type="GO" id="GO:0016887">
    <property type="term" value="F:ATP hydrolysis activity"/>
    <property type="evidence" value="ECO:0000314"/>
    <property type="project" value="SGD"/>
</dbReference>
<dbReference type="GO" id="GO:0140662">
    <property type="term" value="F:ATP-dependent protein folding chaperone"/>
    <property type="evidence" value="ECO:0007669"/>
    <property type="project" value="InterPro"/>
</dbReference>
<dbReference type="GO" id="GO:0005516">
    <property type="term" value="F:calmodulin binding"/>
    <property type="evidence" value="ECO:0000314"/>
    <property type="project" value="SGD"/>
</dbReference>
<dbReference type="GO" id="GO:0031072">
    <property type="term" value="F:heat shock protein binding"/>
    <property type="evidence" value="ECO:0000318"/>
    <property type="project" value="GO_Central"/>
</dbReference>
<dbReference type="GO" id="GO:0044183">
    <property type="term" value="F:protein folding chaperone"/>
    <property type="evidence" value="ECO:0000318"/>
    <property type="project" value="GO_Central"/>
</dbReference>
<dbReference type="GO" id="GO:0051082">
    <property type="term" value="F:unfolded protein binding"/>
    <property type="evidence" value="ECO:0000314"/>
    <property type="project" value="SGD"/>
</dbReference>
<dbReference type="GO" id="GO:0051083">
    <property type="term" value="P:'de novo' cotranslational protein folding"/>
    <property type="evidence" value="ECO:0000314"/>
    <property type="project" value="SGD"/>
</dbReference>
<dbReference type="GO" id="GO:0051085">
    <property type="term" value="P:chaperone cofactor-dependent protein refolding"/>
    <property type="evidence" value="ECO:0000318"/>
    <property type="project" value="GO_Central"/>
</dbReference>
<dbReference type="GO" id="GO:0002181">
    <property type="term" value="P:cytoplasmic translation"/>
    <property type="evidence" value="ECO:0000315"/>
    <property type="project" value="SGD"/>
</dbReference>
<dbReference type="GO" id="GO:0042026">
    <property type="term" value="P:protein refolding"/>
    <property type="evidence" value="ECO:0000318"/>
    <property type="project" value="GO_Central"/>
</dbReference>
<dbReference type="GO" id="GO:0006450">
    <property type="term" value="P:regulation of translational fidelity"/>
    <property type="evidence" value="ECO:0000315"/>
    <property type="project" value="SGD"/>
</dbReference>
<dbReference type="GO" id="GO:0000054">
    <property type="term" value="P:ribosomal subunit export from nucleus"/>
    <property type="evidence" value="ECO:0000316"/>
    <property type="project" value="SGD"/>
</dbReference>
<dbReference type="GO" id="GO:0006364">
    <property type="term" value="P:rRNA processing"/>
    <property type="evidence" value="ECO:0000316"/>
    <property type="project" value="SGD"/>
</dbReference>
<dbReference type="GO" id="GO:0006452">
    <property type="term" value="P:translational frameshifting"/>
    <property type="evidence" value="ECO:0000315"/>
    <property type="project" value="SGD"/>
</dbReference>
<dbReference type="GO" id="GO:0006415">
    <property type="term" value="P:translational termination"/>
    <property type="evidence" value="ECO:0000315"/>
    <property type="project" value="SGD"/>
</dbReference>
<dbReference type="CDD" id="cd24093">
    <property type="entry name" value="ASKHA_NBD_HSP70_Ssb"/>
    <property type="match status" value="1"/>
</dbReference>
<dbReference type="FunFam" id="3.90.640.10:FF:000002">
    <property type="entry name" value="Heat shock 70 kDa"/>
    <property type="match status" value="1"/>
</dbReference>
<dbReference type="FunFam" id="3.30.420.40:FF:000172">
    <property type="entry name" value="Heat shock 70 kDa protein"/>
    <property type="match status" value="1"/>
</dbReference>
<dbReference type="FunFam" id="1.20.1270.10:FF:000014">
    <property type="entry name" value="Heat shock protein 70"/>
    <property type="match status" value="1"/>
</dbReference>
<dbReference type="FunFam" id="3.30.420.40:FF:000026">
    <property type="entry name" value="Heat shock protein 70"/>
    <property type="match status" value="1"/>
</dbReference>
<dbReference type="FunFam" id="2.60.34.10:FF:000004">
    <property type="entry name" value="Heat shock protein SSB1"/>
    <property type="match status" value="1"/>
</dbReference>
<dbReference type="FunFam" id="3.30.30.30:FF:000005">
    <property type="entry name" value="Heat shock protein ssb1"/>
    <property type="match status" value="1"/>
</dbReference>
<dbReference type="Gene3D" id="1.20.1270.10">
    <property type="match status" value="1"/>
</dbReference>
<dbReference type="Gene3D" id="3.30.30.30">
    <property type="match status" value="1"/>
</dbReference>
<dbReference type="Gene3D" id="3.30.420.40">
    <property type="match status" value="2"/>
</dbReference>
<dbReference type="Gene3D" id="3.90.640.10">
    <property type="entry name" value="Actin, Chain A, domain 4"/>
    <property type="match status" value="1"/>
</dbReference>
<dbReference type="Gene3D" id="2.60.34.10">
    <property type="entry name" value="Substrate Binding Domain Of DNAk, Chain A, domain 1"/>
    <property type="match status" value="1"/>
</dbReference>
<dbReference type="InterPro" id="IPR043129">
    <property type="entry name" value="ATPase_NBD"/>
</dbReference>
<dbReference type="InterPro" id="IPR018181">
    <property type="entry name" value="Heat_shock_70_CS"/>
</dbReference>
<dbReference type="InterPro" id="IPR029048">
    <property type="entry name" value="HSP70_C_sf"/>
</dbReference>
<dbReference type="InterPro" id="IPR029047">
    <property type="entry name" value="HSP70_peptide-bd_sf"/>
</dbReference>
<dbReference type="InterPro" id="IPR013126">
    <property type="entry name" value="Hsp_70_fam"/>
</dbReference>
<dbReference type="NCBIfam" id="NF001413">
    <property type="entry name" value="PRK00290.1"/>
    <property type="match status" value="1"/>
</dbReference>
<dbReference type="PANTHER" id="PTHR19375">
    <property type="entry name" value="HEAT SHOCK PROTEIN 70KDA"/>
    <property type="match status" value="1"/>
</dbReference>
<dbReference type="Pfam" id="PF00012">
    <property type="entry name" value="HSP70"/>
    <property type="match status" value="1"/>
</dbReference>
<dbReference type="PRINTS" id="PR00301">
    <property type="entry name" value="HEATSHOCK70"/>
</dbReference>
<dbReference type="SUPFAM" id="SSF53067">
    <property type="entry name" value="Actin-like ATPase domain"/>
    <property type="match status" value="2"/>
</dbReference>
<dbReference type="SUPFAM" id="SSF100934">
    <property type="entry name" value="Heat shock protein 70kD (HSP70), C-terminal subdomain"/>
    <property type="match status" value="1"/>
</dbReference>
<dbReference type="SUPFAM" id="SSF100920">
    <property type="entry name" value="Heat shock protein 70kD (HSP70), peptide-binding domain"/>
    <property type="match status" value="1"/>
</dbReference>
<dbReference type="PROSITE" id="PS00297">
    <property type="entry name" value="HSP70_1"/>
    <property type="match status" value="1"/>
</dbReference>
<dbReference type="PROSITE" id="PS00329">
    <property type="entry name" value="HSP70_2"/>
    <property type="match status" value="1"/>
</dbReference>
<dbReference type="PROSITE" id="PS01036">
    <property type="entry name" value="HSP70_3"/>
    <property type="match status" value="1"/>
</dbReference>
<comment type="function">
    <text evidence="4 5 6 8 9 12 18 20">Ribosome-bound, Hsp70-type chaperone that assists in the cotranslational folding of newly synthesized proteins in the cytosol. Stimulates folding by interacting with nascent chains, binding to short, largely hydrophobic sequences exposed by unfolded proteins, thereby stabilizing longer, more slowly translated, and aggregation-prone nascent polypeptides and domains that cannot fold stably until fully synthesized. The Hsp70-protein substrate interaction depends on ATP-binding and on allosteric regulation between the NBD and the SBD. The ATP-bound state is characterized by a fast exchange rate of substrate (low affinity state), while in the ADP-bound state exchange is much slower (high affinity state). During the Hsp70 cycle, the chaperone switches between the ATP-bound state (open conformation) and the ADP-bound state (closed conformation) by major conformational rearrangements involving mainly the lid domain. Ssb cooperates with a specific Hsp40/Hsp70 co-chaperone termed the ribosome-associated complex (RAC), which stimulates the ATPase activity of the ribosome-associated pool of Ssbs and switches it to the high affinity substrate binding state. Hsp110 chaperone SSE1 and FES1 act as nucleotide exchange factors that cause substrate release.</text>
</comment>
<comment type="catalytic activity">
    <reaction evidence="21">
        <text>ATP + H2O = ADP + phosphate + H(+)</text>
        <dbReference type="Rhea" id="RHEA:13065"/>
        <dbReference type="ChEBI" id="CHEBI:15377"/>
        <dbReference type="ChEBI" id="CHEBI:15378"/>
        <dbReference type="ChEBI" id="CHEBI:30616"/>
        <dbReference type="ChEBI" id="CHEBI:43474"/>
        <dbReference type="ChEBI" id="CHEBI:456216"/>
        <dbReference type="EC" id="3.6.4.10"/>
    </reaction>
</comment>
<comment type="biophysicochemical properties">
    <kinetics>
        <KM evidence="21">270 uM for ATP (at 2.5 mM potassium acetate)</KM>
        <KM evidence="21">147 uM for ATP (at 100 mM potassium acetate)</KM>
        <text evidence="21">kcat is 0.95 min(-1) with ATP as substrate (at 2.5 mM potassium acetate) and 0.81 min(-1) with ATP as substrate (at 100 mM potassium acetate).</text>
    </kinetics>
</comment>
<comment type="subunit">
    <text evidence="5 6 8 9 10 11 12 14 15 20">Binds to ribosomes (PubMed:1394434, PubMed:27917864, PubMed:9670014). Binds close to the ribosomal tunnel exit via contacts with both ribosomal proteins RPL35, RPL39 and RPL19, and rRNA (PubMed:27882919). Directly interacts with nascent polypeptides. This interaction is dependent on the ribosome-associated complex (RAC) (PubMed:11929994, PubMed:23332755). Interacts with SSE1 (PubMed:16219770, PubMed:16221677, PubMed:23332755). Interacts with FES1 (PubMed:17132105). Interacts with NAP1 (PubMed:18086883).</text>
</comment>
<comment type="interaction">
    <interactant intactId="EBI-8627">
        <id>P11484</id>
    </interactant>
    <interactant intactId="EBI-22787">
        <id>P43573</id>
        <label>BUD27</label>
    </interactant>
    <organismsDiffer>false</organismsDiffer>
    <experiments>3</experiments>
</comment>
<comment type="interaction">
    <interactant intactId="EBI-8627">
        <id>P11484</id>
    </interactant>
    <interactant intactId="EBI-1956">
        <id>P40433</id>
        <label>PFK26</label>
    </interactant>
    <organismsDiffer>false</organismsDiffer>
    <experiments>2</experiments>
</comment>
<comment type="interaction">
    <interactant intactId="EBI-8627">
        <id>P11484</id>
    </interactant>
    <interactant intactId="EBI-8648">
        <id>P32589</id>
        <label>SSE1</label>
    </interactant>
    <organismsDiffer>false</organismsDiffer>
    <experiments>3</experiments>
</comment>
<comment type="interaction">
    <interactant intactId="EBI-8627">
        <id>P11484</id>
    </interactant>
    <interactant intactId="EBI-24694">
        <id>P38825</id>
        <label>TOM71</label>
    </interactant>
    <organismsDiffer>false</organismsDiffer>
    <experiments>2</experiments>
</comment>
<comment type="subcellular location">
    <subcellularLocation>
        <location evidence="3 12 28">Cytoplasm</location>
    </subcellularLocation>
    <text evidence="6 12 20">About 50% of the protein is associated with translating ribosomes, but sufficient Ssb exists in the cell for each ribosome to be associated with at least one Ssb molecule.</text>
</comment>
<comment type="induction">
    <text evidence="2 13 16 17">Expression decreases after heat shock or during growth to stationary phase (PubMed:2651414, PubMed:6761581). Degraded during heat shock treatment (at protein level) (PubMed:7646503). Up-regulated upon carbon upshift and down-regulated upon amino acid limitation in an HSF1-dependent manner (PubMed:10322015).</text>
</comment>
<comment type="miscellaneous">
    <text evidence="7">Present with 170000 molecules/cell in log phase SD medium.</text>
</comment>
<comment type="similarity">
    <text evidence="26">Belongs to the heat shock protein 70 family. Ssb-type Hsp70 subfamily.</text>
</comment>
<protein>
    <recommendedName>
        <fullName evidence="22">Ribosome-associated molecular chaperone SSB1</fullName>
        <ecNumber evidence="21">3.6.4.10</ecNumber>
    </recommendedName>
    <alternativeName>
        <fullName evidence="24">Cold-inducible protein YG101</fullName>
    </alternativeName>
    <alternativeName>
        <fullName evidence="23">Heat shock protein SSB1</fullName>
    </alternativeName>
    <alternativeName>
        <fullName evidence="25">Hsp70 chaperone Ssb</fullName>
    </alternativeName>
</protein>
<organism>
    <name type="scientific">Saccharomyces cerevisiae (strain ATCC 204508 / S288c)</name>
    <name type="common">Baker's yeast</name>
    <dbReference type="NCBI Taxonomy" id="559292"/>
    <lineage>
        <taxon>Eukaryota</taxon>
        <taxon>Fungi</taxon>
        <taxon>Dikarya</taxon>
        <taxon>Ascomycota</taxon>
        <taxon>Saccharomycotina</taxon>
        <taxon>Saccharomycetes</taxon>
        <taxon>Saccharomycetales</taxon>
        <taxon>Saccharomycetaceae</taxon>
        <taxon>Saccharomyces</taxon>
    </lineage>
</organism>
<accession>P11484</accession>
<accession>D6VRC7</accession>
<accession>E9P9V5</accession>
<accession>Q05834</accession>
<feature type="initiator methionine" description="Removed" evidence="19">
    <location>
        <position position="1"/>
    </location>
</feature>
<feature type="chain" id="PRO_0000078389" description="Ribosome-associated molecular chaperone SSB1">
    <location>
        <begin position="2"/>
        <end position="613"/>
    </location>
</feature>
<feature type="region of interest" description="Nucleotide binding domain (NBD)" evidence="1">
    <location>
        <begin position="2"/>
        <end position="391"/>
    </location>
</feature>
<feature type="region of interest" description="Inter-domain linker" evidence="1">
    <location>
        <begin position="392"/>
        <end position="402"/>
    </location>
</feature>
<feature type="region of interest" description="Substrate binding domain (SBD)" evidence="1">
    <location>
        <begin position="403"/>
        <end position="613"/>
    </location>
</feature>
<feature type="region of interest" description="Lid domain (SBDalpha)" evidence="1">
    <location>
        <begin position="516"/>
        <end position="612"/>
    </location>
</feature>
<feature type="region of interest" description="Required for interaction with ribosomes" evidence="15">
    <location>
        <begin position="601"/>
        <end position="613"/>
    </location>
</feature>
<feature type="short sequence motif" description="Contributes to ribosome binding" evidence="15">
    <location>
        <begin position="428"/>
        <end position="430"/>
    </location>
</feature>
<feature type="short sequence motif" description="Nuclear export signal" evidence="27">
    <location>
        <begin position="574"/>
        <end position="582"/>
    </location>
</feature>
<feature type="binding site" evidence="1">
    <location>
        <begin position="16"/>
        <end position="18"/>
    </location>
    <ligand>
        <name>ATP</name>
        <dbReference type="ChEBI" id="CHEBI:30616"/>
    </ligand>
</feature>
<feature type="binding site" evidence="1">
    <location>
        <position position="73"/>
    </location>
    <ligand>
        <name>ATP</name>
        <dbReference type="ChEBI" id="CHEBI:30616"/>
    </ligand>
</feature>
<feature type="binding site" evidence="1">
    <location>
        <begin position="205"/>
        <end position="207"/>
    </location>
    <ligand>
        <name>ATP</name>
        <dbReference type="ChEBI" id="CHEBI:30616"/>
    </ligand>
</feature>
<feature type="binding site" evidence="1">
    <location>
        <begin position="271"/>
        <end position="278"/>
    </location>
    <ligand>
        <name>ATP</name>
        <dbReference type="ChEBI" id="CHEBI:30616"/>
    </ligand>
</feature>
<feature type="binding site" evidence="1">
    <location>
        <position position="342"/>
    </location>
    <ligand>
        <name>ATP</name>
        <dbReference type="ChEBI" id="CHEBI:30616"/>
    </ligand>
</feature>
<feature type="modified residue" description="N-acetylalanine" evidence="19">
    <location>
        <position position="2"/>
    </location>
</feature>
<feature type="modified residue" description="Phosphothreonine" evidence="30">
    <location>
        <position position="47"/>
    </location>
</feature>
<feature type="modified residue" description="Phosphothreonine" evidence="31">
    <location>
        <position position="431"/>
    </location>
</feature>
<feature type="mutagenesis site" description="Unable to hydrolyze ATP and moderately reduces ribosome binding." evidence="14">
    <original>K</original>
    <variation>A</variation>
    <location>
        <position position="73"/>
    </location>
</feature>
<feature type="mutagenesis site" description="In SSB1-L(BC): Reduces ribosome-binding to less than 50%." evidence="14">
    <original>KR</original>
    <variation>EE</variation>
    <location>
        <begin position="567"/>
        <end position="568"/>
    </location>
</feature>
<feature type="mutagenesis site" description="In SSB1-D1: Reduces ribosome-binding to less than 50%." evidence="14">
    <original>RK</original>
    <variation>DD</variation>
    <location>
        <begin position="596"/>
        <end position="597"/>
    </location>
</feature>
<feature type="mutagenesis site" description="In SSB1-D2: Reduces ribosome-binding to less than 50%." evidence="14">
    <original>KR</original>
    <variation>DD</variation>
    <location>
        <begin position="603"/>
        <end position="604"/>
    </location>
</feature>
<feature type="sequence conflict" description="In Ref. 5; AAA34692." evidence="26" ref="5">
    <original>AAAIA</original>
    <variation>VVVIV</variation>
    <location>
        <begin position="180"/>
        <end position="184"/>
    </location>
</feature>
<feature type="sequence conflict" description="In Ref. 5; AAA34692." evidence="26" ref="5">
    <original>A</original>
    <variation>V</variation>
    <location>
        <position position="189"/>
    </location>
</feature>
<feature type="sequence conflict" description="In Ref. 5; AAA34692." evidence="26" ref="5">
    <original>S</original>
    <variation>F</variation>
    <location>
        <position position="192"/>
    </location>
</feature>
<feature type="strand" evidence="32">
    <location>
        <begin position="10"/>
        <end position="13"/>
    </location>
</feature>
<feature type="strand" evidence="32">
    <location>
        <begin position="16"/>
        <end position="30"/>
    </location>
</feature>
<feature type="strand" evidence="32">
    <location>
        <begin position="38"/>
        <end position="41"/>
    </location>
</feature>
<feature type="strand" evidence="32">
    <location>
        <begin position="44"/>
        <end position="46"/>
    </location>
</feature>
<feature type="strand" evidence="32">
    <location>
        <begin position="51"/>
        <end position="54"/>
    </location>
</feature>
<feature type="helix" evidence="32">
    <location>
        <begin position="55"/>
        <end position="59"/>
    </location>
</feature>
<feature type="helix" evidence="32">
    <location>
        <begin position="61"/>
        <end position="63"/>
    </location>
</feature>
<feature type="helix" evidence="32">
    <location>
        <begin position="65"/>
        <end position="67"/>
    </location>
</feature>
<feature type="helix" evidence="32">
    <location>
        <begin position="72"/>
        <end position="74"/>
    </location>
</feature>
<feature type="turn" evidence="32">
    <location>
        <begin position="75"/>
        <end position="77"/>
    </location>
</feature>
<feature type="helix" evidence="32">
    <location>
        <begin position="83"/>
        <end position="89"/>
    </location>
</feature>
<feature type="strand" evidence="32">
    <location>
        <begin position="93"/>
        <end position="99"/>
    </location>
</feature>
<feature type="strand" evidence="32">
    <location>
        <begin position="102"/>
        <end position="109"/>
    </location>
</feature>
<feature type="strand" evidence="32">
    <location>
        <begin position="112"/>
        <end position="116"/>
    </location>
</feature>
<feature type="helix" evidence="32">
    <location>
        <begin position="118"/>
        <end position="137"/>
    </location>
</feature>
<feature type="strand" evidence="32">
    <location>
        <begin position="143"/>
        <end position="148"/>
    </location>
</feature>
<feature type="helix" evidence="32">
    <location>
        <begin position="154"/>
        <end position="166"/>
    </location>
</feature>
<feature type="strand" evidence="32">
    <location>
        <begin position="170"/>
        <end position="176"/>
    </location>
</feature>
<feature type="helix" evidence="32">
    <location>
        <begin position="177"/>
        <end position="184"/>
    </location>
</feature>
<feature type="turn" evidence="32">
    <location>
        <begin position="185"/>
        <end position="190"/>
    </location>
</feature>
<feature type="strand" evidence="32">
    <location>
        <begin position="196"/>
        <end position="203"/>
    </location>
</feature>
<feature type="strand" evidence="32">
    <location>
        <begin position="208"/>
        <end position="216"/>
    </location>
</feature>
<feature type="strand" evidence="32">
    <location>
        <begin position="219"/>
        <end position="228"/>
    </location>
</feature>
<feature type="helix" evidence="32">
    <location>
        <begin position="233"/>
        <end position="252"/>
    </location>
</feature>
<feature type="helix" evidence="32">
    <location>
        <begin position="260"/>
        <end position="276"/>
    </location>
</feature>
<feature type="turn" evidence="32">
    <location>
        <begin position="277"/>
        <end position="279"/>
    </location>
</feature>
<feature type="strand" evidence="32">
    <location>
        <begin position="280"/>
        <end position="291"/>
    </location>
</feature>
<feature type="strand" evidence="32">
    <location>
        <begin position="294"/>
        <end position="301"/>
    </location>
</feature>
<feature type="helix" evidence="32">
    <location>
        <begin position="302"/>
        <end position="308"/>
    </location>
</feature>
<feature type="helix" evidence="32">
    <location>
        <begin position="310"/>
        <end position="315"/>
    </location>
</feature>
<feature type="helix" evidence="32">
    <location>
        <begin position="317"/>
        <end position="327"/>
    </location>
</feature>
<feature type="helix" evidence="32">
    <location>
        <begin position="331"/>
        <end position="333"/>
    </location>
</feature>
<feature type="strand" evidence="32">
    <location>
        <begin position="336"/>
        <end position="341"/>
    </location>
</feature>
<feature type="helix" evidence="32">
    <location>
        <begin position="342"/>
        <end position="345"/>
    </location>
</feature>
<feature type="helix" evidence="32">
    <location>
        <begin position="347"/>
        <end position="356"/>
    </location>
</feature>
<feature type="turn" evidence="32">
    <location>
        <begin position="357"/>
        <end position="359"/>
    </location>
</feature>
<feature type="turn" evidence="32">
    <location>
        <begin position="368"/>
        <end position="370"/>
    </location>
</feature>
<feature type="helix" evidence="32">
    <location>
        <begin position="371"/>
        <end position="383"/>
    </location>
</feature>